<feature type="chain" id="PRO_0000097151" description="DNA damage checkpoint control protein rad1">
    <location>
        <begin position="1"/>
        <end position="323"/>
    </location>
</feature>
<feature type="region of interest" description="Disordered" evidence="1">
    <location>
        <begin position="284"/>
        <end position="323"/>
    </location>
</feature>
<feature type="compositionally biased region" description="Acidic residues" evidence="1">
    <location>
        <begin position="284"/>
        <end position="296"/>
    </location>
</feature>
<feature type="compositionally biased region" description="Polar residues" evidence="1">
    <location>
        <begin position="297"/>
        <end position="306"/>
    </location>
</feature>
<name>RAD1_SCHPO</name>
<comment type="function">
    <text>Recombinational reparation of DNA damages induced by UV and gamma radiation.</text>
</comment>
<comment type="interaction">
    <interactant intactId="EBI-767637">
        <id>P22193</id>
    </interactant>
    <interactant intactId="EBI-767574">
        <id>Q10159</id>
        <label>myh1</label>
    </interactant>
    <organismsDiffer>false</organismsDiffer>
    <experiments>2</experiments>
</comment>
<comment type="subcellular location">
    <subcellularLocation>
        <location evidence="2">Nucleus</location>
    </subcellularLocation>
</comment>
<comment type="similarity">
    <text evidence="2">Belongs to the rad1 family.</text>
</comment>
<comment type="sequence caution" evidence="2">
    <conflict type="erroneous gene model prediction">
        <sequence resource="EMBL-CDS" id="AAA35329"/>
    </conflict>
</comment>
<accession>P22193</accession>
<protein>
    <recommendedName>
        <fullName>DNA damage checkpoint control protein rad1</fullName>
    </recommendedName>
</protein>
<dbReference type="EMBL" id="M38132">
    <property type="protein sequence ID" value="AAA35329.1"/>
    <property type="status" value="ALT_SEQ"/>
    <property type="molecule type" value="Genomic_DNA"/>
</dbReference>
<dbReference type="EMBL" id="Z28385">
    <property type="protein sequence ID" value="CAA82231.1"/>
    <property type="molecule type" value="mRNA"/>
</dbReference>
<dbReference type="EMBL" id="CU329670">
    <property type="protein sequence ID" value="CAB52571.1"/>
    <property type="molecule type" value="Genomic_DNA"/>
</dbReference>
<dbReference type="PIR" id="JC2578">
    <property type="entry name" value="JC2578"/>
</dbReference>
<dbReference type="RefSeq" id="NP_594809.1">
    <property type="nucleotide sequence ID" value="NM_001020238.2"/>
</dbReference>
<dbReference type="SMR" id="P22193"/>
<dbReference type="BioGRID" id="279014">
    <property type="interactions" value="118"/>
</dbReference>
<dbReference type="FunCoup" id="P22193">
    <property type="interactions" value="621"/>
</dbReference>
<dbReference type="IntAct" id="P22193">
    <property type="interactions" value="1"/>
</dbReference>
<dbReference type="STRING" id="284812.P22193"/>
<dbReference type="iPTMnet" id="P22193"/>
<dbReference type="PaxDb" id="4896-SPAC1952.07.1"/>
<dbReference type="EnsemblFungi" id="SPAC1952.07.1">
    <property type="protein sequence ID" value="SPAC1952.07.1:pep"/>
    <property type="gene ID" value="SPAC1952.07"/>
</dbReference>
<dbReference type="GeneID" id="2542558"/>
<dbReference type="KEGG" id="spo:2542558"/>
<dbReference type="PomBase" id="SPAC1952.07">
    <property type="gene designation" value="rad1"/>
</dbReference>
<dbReference type="VEuPathDB" id="FungiDB:SPAC1952.07"/>
<dbReference type="eggNOG" id="KOG3194">
    <property type="taxonomic scope" value="Eukaryota"/>
</dbReference>
<dbReference type="HOGENOM" id="CLU_035332_0_0_1"/>
<dbReference type="InParanoid" id="P22193"/>
<dbReference type="OMA" id="WSQAYKF"/>
<dbReference type="PhylomeDB" id="P22193"/>
<dbReference type="Reactome" id="R-SPO-176187">
    <property type="pathway name" value="Activation of ATR in response to replication stress"/>
</dbReference>
<dbReference type="PRO" id="PR:P22193"/>
<dbReference type="Proteomes" id="UP000002485">
    <property type="component" value="Chromosome I"/>
</dbReference>
<dbReference type="GO" id="GO:0030896">
    <property type="term" value="C:checkpoint clamp complex"/>
    <property type="evidence" value="ECO:0000314"/>
    <property type="project" value="PomBase"/>
</dbReference>
<dbReference type="GO" id="GO:0140445">
    <property type="term" value="C:chromosome, telomeric repeat region"/>
    <property type="evidence" value="ECO:0000314"/>
    <property type="project" value="PomBase"/>
</dbReference>
<dbReference type="GO" id="GO:0005737">
    <property type="term" value="C:cytoplasm"/>
    <property type="evidence" value="ECO:0000314"/>
    <property type="project" value="PomBase"/>
</dbReference>
<dbReference type="GO" id="GO:0005829">
    <property type="term" value="C:cytosol"/>
    <property type="evidence" value="ECO:0007005"/>
    <property type="project" value="PomBase"/>
</dbReference>
<dbReference type="GO" id="GO:0005634">
    <property type="term" value="C:nucleus"/>
    <property type="evidence" value="ECO:0000314"/>
    <property type="project" value="PomBase"/>
</dbReference>
<dbReference type="GO" id="GO:0035861">
    <property type="term" value="C:site of double-strand break"/>
    <property type="evidence" value="ECO:0000314"/>
    <property type="project" value="PomBase"/>
</dbReference>
<dbReference type="GO" id="GO:0000077">
    <property type="term" value="P:DNA damage checkpoint signaling"/>
    <property type="evidence" value="ECO:0000318"/>
    <property type="project" value="GO_Central"/>
</dbReference>
<dbReference type="GO" id="GO:0006281">
    <property type="term" value="P:DNA repair"/>
    <property type="evidence" value="ECO:0000318"/>
    <property type="project" value="GO_Central"/>
</dbReference>
<dbReference type="GO" id="GO:0033315">
    <property type="term" value="P:meiotic G2/MI DNA replication checkpoint signaling"/>
    <property type="evidence" value="ECO:0000315"/>
    <property type="project" value="PomBase"/>
</dbReference>
<dbReference type="GO" id="GO:0033314">
    <property type="term" value="P:mitotic DNA replication checkpoint signaling"/>
    <property type="evidence" value="ECO:0000315"/>
    <property type="project" value="PomBase"/>
</dbReference>
<dbReference type="GO" id="GO:0007095">
    <property type="term" value="P:mitotic G2 DNA damage checkpoint signaling"/>
    <property type="evidence" value="ECO:0000315"/>
    <property type="project" value="PomBase"/>
</dbReference>
<dbReference type="GO" id="GO:0031573">
    <property type="term" value="P:mitotic intra-S DNA damage checkpoint signaling"/>
    <property type="evidence" value="ECO:0000315"/>
    <property type="project" value="PomBase"/>
</dbReference>
<dbReference type="GO" id="GO:0000723">
    <property type="term" value="P:telomere maintenance"/>
    <property type="evidence" value="ECO:0000315"/>
    <property type="project" value="PomBase"/>
</dbReference>
<dbReference type="FunFam" id="3.70.10.10:FF:000029">
    <property type="entry name" value="DNA damage checkpoint control protein rad1"/>
    <property type="match status" value="1"/>
</dbReference>
<dbReference type="Gene3D" id="3.70.10.10">
    <property type="match status" value="1"/>
</dbReference>
<dbReference type="InterPro" id="IPR003011">
    <property type="entry name" value="Cell_cycle_checkpoint_Rad1"/>
</dbReference>
<dbReference type="InterPro" id="IPR046938">
    <property type="entry name" value="DNA_clamp_sf"/>
</dbReference>
<dbReference type="InterPro" id="IPR003021">
    <property type="entry name" value="Rad1_Rec1_Rad17"/>
</dbReference>
<dbReference type="PANTHER" id="PTHR10870">
    <property type="entry name" value="CELL CYCLE CHECKPOINT PROTEIN RAD1"/>
    <property type="match status" value="1"/>
</dbReference>
<dbReference type="PANTHER" id="PTHR10870:SF0">
    <property type="entry name" value="CELL CYCLE CHECKPOINT PROTEIN RAD1"/>
    <property type="match status" value="1"/>
</dbReference>
<dbReference type="Pfam" id="PF02144">
    <property type="entry name" value="Rad1"/>
    <property type="match status" value="1"/>
</dbReference>
<dbReference type="PRINTS" id="PR01245">
    <property type="entry name" value="RAD1REC1"/>
</dbReference>
<dbReference type="PRINTS" id="PR01246">
    <property type="entry name" value="RAD1REPAIR"/>
</dbReference>
<dbReference type="SUPFAM" id="SSF55979">
    <property type="entry name" value="DNA clamp"/>
    <property type="match status" value="1"/>
</dbReference>
<reference key="1">
    <citation type="journal article" date="1990" name="Mol. Cell. Biol.">
        <title>Cloning and analysis of a gene involved in DNA repair and recombination, the rad1 gene of Schizosaccharomyces pombe.</title>
        <authorList>
            <person name="Sunnerhagen P."/>
            <person name="Seaton B.L."/>
            <person name="Nasim A."/>
            <person name="Subramani S."/>
        </authorList>
    </citation>
    <scope>NUCLEOTIDE SEQUENCE [GENOMIC DNA]</scope>
</reference>
<reference key="2">
    <citation type="journal article" date="1994" name="Nucleic Acids Res.">
        <title>Fission yeast gene structure and recognition.</title>
        <authorList>
            <person name="Zhang M.Q."/>
            <person name="Marr T.G."/>
        </authorList>
    </citation>
    <scope>SEQUENCE REVISION</scope>
</reference>
<reference key="3">
    <citation type="journal article" date="1994" name="Gene">
        <title>The Schizosaccharomyces pombe rad1 gene consists of three exons and the cDNA sequence is partially homologous to the Ustilago maydis REC1 cDNA.</title>
        <authorList>
            <person name="Long K.E."/>
            <person name="Sunnerhagen P."/>
            <person name="Subramani S."/>
        </authorList>
    </citation>
    <scope>NUCLEOTIDE SEQUENCE [MRNA]</scope>
    <source>
        <strain>972 / ATCC 24843</strain>
    </source>
</reference>
<reference key="4">
    <citation type="journal article" date="2002" name="Nature">
        <title>The genome sequence of Schizosaccharomyces pombe.</title>
        <authorList>
            <person name="Wood V."/>
            <person name="Gwilliam R."/>
            <person name="Rajandream M.A."/>
            <person name="Lyne M.H."/>
            <person name="Lyne R."/>
            <person name="Stewart A."/>
            <person name="Sgouros J.G."/>
            <person name="Peat N."/>
            <person name="Hayles J."/>
            <person name="Baker S.G."/>
            <person name="Basham D."/>
            <person name="Bowman S."/>
            <person name="Brooks K."/>
            <person name="Brown D."/>
            <person name="Brown S."/>
            <person name="Chillingworth T."/>
            <person name="Churcher C.M."/>
            <person name="Collins M."/>
            <person name="Connor R."/>
            <person name="Cronin A."/>
            <person name="Davis P."/>
            <person name="Feltwell T."/>
            <person name="Fraser A."/>
            <person name="Gentles S."/>
            <person name="Goble A."/>
            <person name="Hamlin N."/>
            <person name="Harris D.E."/>
            <person name="Hidalgo J."/>
            <person name="Hodgson G."/>
            <person name="Holroyd S."/>
            <person name="Hornsby T."/>
            <person name="Howarth S."/>
            <person name="Huckle E.J."/>
            <person name="Hunt S."/>
            <person name="Jagels K."/>
            <person name="James K.D."/>
            <person name="Jones L."/>
            <person name="Jones M."/>
            <person name="Leather S."/>
            <person name="McDonald S."/>
            <person name="McLean J."/>
            <person name="Mooney P."/>
            <person name="Moule S."/>
            <person name="Mungall K.L."/>
            <person name="Murphy L.D."/>
            <person name="Niblett D."/>
            <person name="Odell C."/>
            <person name="Oliver K."/>
            <person name="O'Neil S."/>
            <person name="Pearson D."/>
            <person name="Quail M.A."/>
            <person name="Rabbinowitsch E."/>
            <person name="Rutherford K.M."/>
            <person name="Rutter S."/>
            <person name="Saunders D."/>
            <person name="Seeger K."/>
            <person name="Sharp S."/>
            <person name="Skelton J."/>
            <person name="Simmonds M.N."/>
            <person name="Squares R."/>
            <person name="Squares S."/>
            <person name="Stevens K."/>
            <person name="Taylor K."/>
            <person name="Taylor R.G."/>
            <person name="Tivey A."/>
            <person name="Walsh S.V."/>
            <person name="Warren T."/>
            <person name="Whitehead S."/>
            <person name="Woodward J.R."/>
            <person name="Volckaert G."/>
            <person name="Aert R."/>
            <person name="Robben J."/>
            <person name="Grymonprez B."/>
            <person name="Weltjens I."/>
            <person name="Vanstreels E."/>
            <person name="Rieger M."/>
            <person name="Schaefer M."/>
            <person name="Mueller-Auer S."/>
            <person name="Gabel C."/>
            <person name="Fuchs M."/>
            <person name="Duesterhoeft A."/>
            <person name="Fritzc C."/>
            <person name="Holzer E."/>
            <person name="Moestl D."/>
            <person name="Hilbert H."/>
            <person name="Borzym K."/>
            <person name="Langer I."/>
            <person name="Beck A."/>
            <person name="Lehrach H."/>
            <person name="Reinhardt R."/>
            <person name="Pohl T.M."/>
            <person name="Eger P."/>
            <person name="Zimmermann W."/>
            <person name="Wedler H."/>
            <person name="Wambutt R."/>
            <person name="Purnelle B."/>
            <person name="Goffeau A."/>
            <person name="Cadieu E."/>
            <person name="Dreano S."/>
            <person name="Gloux S."/>
            <person name="Lelaure V."/>
            <person name="Mottier S."/>
            <person name="Galibert F."/>
            <person name="Aves S.J."/>
            <person name="Xiang Z."/>
            <person name="Hunt C."/>
            <person name="Moore K."/>
            <person name="Hurst S.M."/>
            <person name="Lucas M."/>
            <person name="Rochet M."/>
            <person name="Gaillardin C."/>
            <person name="Tallada V.A."/>
            <person name="Garzon A."/>
            <person name="Thode G."/>
            <person name="Daga R.R."/>
            <person name="Cruzado L."/>
            <person name="Jimenez J."/>
            <person name="Sanchez M."/>
            <person name="del Rey F."/>
            <person name="Benito J."/>
            <person name="Dominguez A."/>
            <person name="Revuelta J.L."/>
            <person name="Moreno S."/>
            <person name="Armstrong J."/>
            <person name="Forsburg S.L."/>
            <person name="Cerutti L."/>
            <person name="Lowe T."/>
            <person name="McCombie W.R."/>
            <person name="Paulsen I."/>
            <person name="Potashkin J."/>
            <person name="Shpakovski G.V."/>
            <person name="Ussery D."/>
            <person name="Barrell B.G."/>
            <person name="Nurse P."/>
        </authorList>
    </citation>
    <scope>NUCLEOTIDE SEQUENCE [LARGE SCALE GENOMIC DNA]</scope>
    <source>
        <strain>972 / ATCC 24843</strain>
    </source>
</reference>
<organism>
    <name type="scientific">Schizosaccharomyces pombe (strain 972 / ATCC 24843)</name>
    <name type="common">Fission yeast</name>
    <dbReference type="NCBI Taxonomy" id="284812"/>
    <lineage>
        <taxon>Eukaryota</taxon>
        <taxon>Fungi</taxon>
        <taxon>Dikarya</taxon>
        <taxon>Ascomycota</taxon>
        <taxon>Taphrinomycotina</taxon>
        <taxon>Schizosaccharomycetes</taxon>
        <taxon>Schizosaccharomycetales</taxon>
        <taxon>Schizosaccharomycetaceae</taxon>
        <taxon>Schizosaccharomyces</taxon>
    </lineage>
</organism>
<proteinExistence type="evidence at protein level"/>
<keyword id="KW-0227">DNA damage</keyword>
<keyword id="KW-0234">DNA repair</keyword>
<keyword id="KW-0539">Nucleus</keyword>
<keyword id="KW-1185">Reference proteome</keyword>
<gene>
    <name type="primary">rad1</name>
    <name type="ORF">SPAC1952.07</name>
</gene>
<evidence type="ECO:0000256" key="1">
    <source>
        <dbReference type="SAM" id="MobiDB-lite"/>
    </source>
</evidence>
<evidence type="ECO:0000305" key="2"/>
<sequence length="323" mass="36528">MFQAETVCLKQIQSTLRCIDFSKECTIEITSRGLRFAVEESQSLQAHAFLDKSLFQTFNFQGDSDGDTYMFQTMISPLLQSLSIYTDGKERISTSAWDQPTVNIMHKRGVICKVQYNGPGCPFIWEVEEMAGYATACELLTMECEDDVDINRLASTLCTKIIMKSNWLYDALVELDNNMGENLIIHTSSQKSTFLLRCVGALSTTEIEYPNEKSVLESFETDSENTYSYRFSLIRHALKALQVGSKVNLRIDENGTLSIQIMLVGQEGLCTFVDFCIVPLDLVSEDEEEDEEEEPAESNQSDNNVLRNDPNYRGDAETEDEDS</sequence>